<dbReference type="EC" id="3.1.26.5" evidence="1"/>
<dbReference type="EMBL" id="Y18930">
    <property type="protein sequence ID" value="CAB57564.1"/>
    <property type="molecule type" value="Genomic_DNA"/>
</dbReference>
<dbReference type="EMBL" id="AE006641">
    <property type="protein sequence ID" value="AAK41035.1"/>
    <property type="molecule type" value="Genomic_DNA"/>
</dbReference>
<dbReference type="PIR" id="D90222">
    <property type="entry name" value="D90222"/>
</dbReference>
<dbReference type="RefSeq" id="WP_009991313.1">
    <property type="nucleotide sequence ID" value="NC_002754.1"/>
</dbReference>
<dbReference type="SMR" id="Q9UXC7"/>
<dbReference type="STRING" id="273057.SSO0739"/>
<dbReference type="PaxDb" id="273057-SSO0739"/>
<dbReference type="EnsemblBacteria" id="AAK41035">
    <property type="protein sequence ID" value="AAK41035"/>
    <property type="gene ID" value="SSO0739"/>
</dbReference>
<dbReference type="KEGG" id="sso:SSO0739"/>
<dbReference type="PATRIC" id="fig|273057.12.peg.735"/>
<dbReference type="eggNOG" id="arCOG01365">
    <property type="taxonomic scope" value="Archaea"/>
</dbReference>
<dbReference type="HOGENOM" id="CLU_1801579_0_0_2"/>
<dbReference type="InParanoid" id="Q9UXC7"/>
<dbReference type="PhylomeDB" id="Q9UXC7"/>
<dbReference type="Proteomes" id="UP000001974">
    <property type="component" value="Chromosome"/>
</dbReference>
<dbReference type="GO" id="GO:0005737">
    <property type="term" value="C:cytoplasm"/>
    <property type="evidence" value="ECO:0007669"/>
    <property type="project" value="UniProtKB-SubCell"/>
</dbReference>
<dbReference type="GO" id="GO:0030677">
    <property type="term" value="C:ribonuclease P complex"/>
    <property type="evidence" value="ECO:0007669"/>
    <property type="project" value="UniProtKB-UniRule"/>
</dbReference>
<dbReference type="GO" id="GO:0004526">
    <property type="term" value="F:ribonuclease P activity"/>
    <property type="evidence" value="ECO:0007669"/>
    <property type="project" value="UniProtKB-UniRule"/>
</dbReference>
<dbReference type="GO" id="GO:0001682">
    <property type="term" value="P:tRNA 5'-leader removal"/>
    <property type="evidence" value="ECO:0007669"/>
    <property type="project" value="UniProtKB-UniRule"/>
</dbReference>
<dbReference type="Gene3D" id="3.30.70.3250">
    <property type="entry name" value="Ribonuclease P, Pop5 subunit"/>
    <property type="match status" value="1"/>
</dbReference>
<dbReference type="HAMAP" id="MF_00755">
    <property type="entry name" value="RNase_P_2"/>
    <property type="match status" value="1"/>
</dbReference>
<dbReference type="InterPro" id="IPR002759">
    <property type="entry name" value="Pop5/Rpp14/Rnp2-like"/>
</dbReference>
<dbReference type="InterPro" id="IPR038085">
    <property type="entry name" value="Rnp2-like_sf"/>
</dbReference>
<dbReference type="Pfam" id="PF01900">
    <property type="entry name" value="RNase_P_Rpp14"/>
    <property type="match status" value="1"/>
</dbReference>
<dbReference type="SUPFAM" id="SSF160350">
    <property type="entry name" value="Rnp2-like"/>
    <property type="match status" value="1"/>
</dbReference>
<keyword id="KW-0963">Cytoplasm</keyword>
<keyword id="KW-0255">Endonuclease</keyword>
<keyword id="KW-0378">Hydrolase</keyword>
<keyword id="KW-0540">Nuclease</keyword>
<keyword id="KW-1185">Reference proteome</keyword>
<keyword id="KW-0819">tRNA processing</keyword>
<feature type="chain" id="PRO_0000140029" description="Ribonuclease P protein component 2">
    <location>
        <begin position="1"/>
        <end position="143"/>
    </location>
</feature>
<name>RNP2_SACS2</name>
<reference key="1">
    <citation type="journal article" date="2000" name="Genome">
        <title>Gene content and organization of a 281-kbp contig from the genome of the extremely thermophilic archaeon, Sulfolobus solfataricus P2.</title>
        <authorList>
            <person name="Charlebois R.L."/>
            <person name="Singh R.K."/>
            <person name="Chan-Weiher C.C.-Y."/>
            <person name="Allard G."/>
            <person name="Chow C."/>
            <person name="Confalonieri F."/>
            <person name="Curtis B."/>
            <person name="Duguet M."/>
            <person name="Erauso G."/>
            <person name="Faguy D."/>
            <person name="Gaasterland T."/>
            <person name="Garrett R.A."/>
            <person name="Gordon P."/>
            <person name="Jeffries A.C."/>
            <person name="Kozera C."/>
            <person name="Kushwaha N."/>
            <person name="Lafleur E."/>
            <person name="Medina N."/>
            <person name="Peng X."/>
            <person name="Penny S.L."/>
            <person name="She Q."/>
            <person name="St Jean A."/>
            <person name="van der Oost J."/>
            <person name="Young F."/>
            <person name="Zivanovic Y."/>
            <person name="Doolittle W.F."/>
            <person name="Ragan M.A."/>
            <person name="Sensen C.W."/>
        </authorList>
    </citation>
    <scope>NUCLEOTIDE SEQUENCE [LARGE SCALE GENOMIC DNA]</scope>
    <source>
        <strain>ATCC 35092 / DSM 1617 / JCM 11322 / P2</strain>
    </source>
</reference>
<reference key="2">
    <citation type="journal article" date="2001" name="Proc. Natl. Acad. Sci. U.S.A.">
        <title>The complete genome of the crenarchaeon Sulfolobus solfataricus P2.</title>
        <authorList>
            <person name="She Q."/>
            <person name="Singh R.K."/>
            <person name="Confalonieri F."/>
            <person name="Zivanovic Y."/>
            <person name="Allard G."/>
            <person name="Awayez M.J."/>
            <person name="Chan-Weiher C.C.-Y."/>
            <person name="Clausen I.G."/>
            <person name="Curtis B.A."/>
            <person name="De Moors A."/>
            <person name="Erauso G."/>
            <person name="Fletcher C."/>
            <person name="Gordon P.M.K."/>
            <person name="Heikamp-de Jong I."/>
            <person name="Jeffries A.C."/>
            <person name="Kozera C.J."/>
            <person name="Medina N."/>
            <person name="Peng X."/>
            <person name="Thi-Ngoc H.P."/>
            <person name="Redder P."/>
            <person name="Schenk M.E."/>
            <person name="Theriault C."/>
            <person name="Tolstrup N."/>
            <person name="Charlebois R.L."/>
            <person name="Doolittle W.F."/>
            <person name="Duguet M."/>
            <person name="Gaasterland T."/>
            <person name="Garrett R.A."/>
            <person name="Ragan M.A."/>
            <person name="Sensen C.W."/>
            <person name="Van der Oost J."/>
        </authorList>
    </citation>
    <scope>NUCLEOTIDE SEQUENCE [LARGE SCALE GENOMIC DNA]</scope>
    <source>
        <strain>ATCC 35092 / DSM 1617 / JCM 11322 / P2</strain>
    </source>
</reference>
<sequence length="143" mass="16523">MNSIQLIIDIILILWILILTVLYFKRRQLNVDIVKNKKIIRAKRYIVFYVISEYKVKGDDLERVIRNSLKDLLGSVWLNIANPKVVTYREDTQEGIISTNRVGYKAVLASLPFAKEINNNKILIVPRRTTGSLKKAKKLIGLK</sequence>
<organism>
    <name type="scientific">Saccharolobus solfataricus (strain ATCC 35092 / DSM 1617 / JCM 11322 / P2)</name>
    <name type="common">Sulfolobus solfataricus</name>
    <dbReference type="NCBI Taxonomy" id="273057"/>
    <lineage>
        <taxon>Archaea</taxon>
        <taxon>Thermoproteota</taxon>
        <taxon>Thermoprotei</taxon>
        <taxon>Sulfolobales</taxon>
        <taxon>Sulfolobaceae</taxon>
        <taxon>Saccharolobus</taxon>
    </lineage>
</organism>
<gene>
    <name evidence="1" type="primary">rnp2</name>
    <name type="ordered locus">SSO0739</name>
    <name type="ORF">C20_030</name>
</gene>
<evidence type="ECO:0000255" key="1">
    <source>
        <dbReference type="HAMAP-Rule" id="MF_00755"/>
    </source>
</evidence>
<comment type="function">
    <text evidence="1">Part of ribonuclease P, a protein complex that generates mature tRNA molecules by cleaving their 5'-ends.</text>
</comment>
<comment type="catalytic activity">
    <reaction evidence="1">
        <text>Endonucleolytic cleavage of RNA, removing 5'-extranucleotides from tRNA precursor.</text>
        <dbReference type="EC" id="3.1.26.5"/>
    </reaction>
</comment>
<comment type="subunit">
    <text evidence="1">Consists of a catalytic RNA component and at least 4-5 protein subunits.</text>
</comment>
<comment type="subcellular location">
    <subcellularLocation>
        <location evidence="1">Cytoplasm</location>
    </subcellularLocation>
</comment>
<comment type="similarity">
    <text evidence="1">Belongs to the eukaryotic/archaeal RNase P protein component 2 family.</text>
</comment>
<protein>
    <recommendedName>
        <fullName evidence="1">Ribonuclease P protein component 2</fullName>
        <shortName evidence="1">RNase P component 2</shortName>
        <ecNumber evidence="1">3.1.26.5</ecNumber>
    </recommendedName>
    <alternativeName>
        <fullName evidence="1">Pop5</fullName>
    </alternativeName>
</protein>
<proteinExistence type="inferred from homology"/>
<accession>Q9UXC7</accession>